<comment type="similarity">
    <text evidence="1">Belongs to the UPF0741 family.</text>
</comment>
<comment type="sequence caution" evidence="2">
    <conflict type="erroneous initiation">
        <sequence resource="EMBL-CDS" id="ACA38562"/>
    </conflict>
</comment>
<sequence>MANEFKVCDECQAVNLKTLIPKLKEIDPDATIEIGCHSYCGPGRKKTFTFVNSRPVAALTEEELMEKVLTKLKNK</sequence>
<name>Y950_LYSSC</name>
<reference key="1">
    <citation type="journal article" date="2008" name="J. Bacteriol.">
        <title>Complete genome sequence of the mosquitocidal bacterium Bacillus sphaericus C3-41 and comparison with those of closely related Bacillus species.</title>
        <authorList>
            <person name="Hu X."/>
            <person name="Fan W."/>
            <person name="Han B."/>
            <person name="Liu H."/>
            <person name="Zheng D."/>
            <person name="Li Q."/>
            <person name="Dong W."/>
            <person name="Yan J."/>
            <person name="Gao M."/>
            <person name="Berry C."/>
            <person name="Yuan Z."/>
        </authorList>
    </citation>
    <scope>NUCLEOTIDE SEQUENCE [LARGE SCALE GENOMIC DNA]</scope>
    <source>
        <strain>C3-41</strain>
    </source>
</reference>
<gene>
    <name type="ordered locus">Bsph_0950</name>
</gene>
<organism>
    <name type="scientific">Lysinibacillus sphaericus (strain C3-41)</name>
    <dbReference type="NCBI Taxonomy" id="444177"/>
    <lineage>
        <taxon>Bacteria</taxon>
        <taxon>Bacillati</taxon>
        <taxon>Bacillota</taxon>
        <taxon>Bacilli</taxon>
        <taxon>Bacillales</taxon>
        <taxon>Bacillaceae</taxon>
        <taxon>Lysinibacillus</taxon>
    </lineage>
</organism>
<accession>B1I024</accession>
<feature type="chain" id="PRO_0000372744" description="UPF0741 protein Bsph_0950">
    <location>
        <begin position="1"/>
        <end position="75"/>
    </location>
</feature>
<dbReference type="EMBL" id="CP000817">
    <property type="protein sequence ID" value="ACA38562.1"/>
    <property type="status" value="ALT_INIT"/>
    <property type="molecule type" value="Genomic_DNA"/>
</dbReference>
<dbReference type="RefSeq" id="WP_008179127.1">
    <property type="nucleotide sequence ID" value="NC_010382.1"/>
</dbReference>
<dbReference type="SMR" id="B1I024"/>
<dbReference type="EnsemblBacteria" id="ACA38562">
    <property type="protein sequence ID" value="ACA38562"/>
    <property type="gene ID" value="Bsph_0950"/>
</dbReference>
<dbReference type="GeneID" id="29439176"/>
<dbReference type="KEGG" id="lsp:Bsph_0950"/>
<dbReference type="HOGENOM" id="CLU_163820_1_0_9"/>
<dbReference type="Proteomes" id="UP000002164">
    <property type="component" value="Chromosome"/>
</dbReference>
<dbReference type="HAMAP" id="MF_01863">
    <property type="entry name" value="UPF0741"/>
    <property type="match status" value="1"/>
</dbReference>
<dbReference type="InterPro" id="IPR009910">
    <property type="entry name" value="DUF1450"/>
</dbReference>
<dbReference type="InterPro" id="IPR020880">
    <property type="entry name" value="UPF0741"/>
</dbReference>
<dbReference type="Pfam" id="PF07293">
    <property type="entry name" value="DUF1450"/>
    <property type="match status" value="1"/>
</dbReference>
<proteinExistence type="inferred from homology"/>
<protein>
    <recommendedName>
        <fullName evidence="1">UPF0741 protein Bsph_0950</fullName>
    </recommendedName>
</protein>
<evidence type="ECO:0000255" key="1">
    <source>
        <dbReference type="HAMAP-Rule" id="MF_01863"/>
    </source>
</evidence>
<evidence type="ECO:0000305" key="2"/>